<protein>
    <recommendedName>
        <fullName evidence="1">Inosine triphosphate pyrophosphatase</fullName>
        <shortName evidence="1">ITPase</shortName>
        <shortName evidence="1">Inosine triphosphatase</shortName>
        <ecNumber evidence="1">3.6.1.66</ecNumber>
    </recommendedName>
    <alternativeName>
        <fullName evidence="1">Non-canonical purine NTP pyrophosphatase</fullName>
    </alternativeName>
    <alternativeName>
        <fullName evidence="1">Non-standard purine NTP pyrophosphatase</fullName>
    </alternativeName>
    <alternativeName>
        <fullName evidence="1">Nucleoside-triphosphate diphosphatase</fullName>
    </alternativeName>
    <alternativeName>
        <fullName evidence="1">Nucleoside-triphosphate pyrophosphatase</fullName>
        <shortName evidence="1">NTPase</shortName>
    </alternativeName>
    <alternativeName>
        <fullName evidence="1">XTP/dITP diphosphatase</fullName>
    </alternativeName>
</protein>
<feature type="chain" id="PRO_0000413111" description="Inosine triphosphate pyrophosphatase">
    <location>
        <begin position="1"/>
        <end position="203"/>
    </location>
</feature>
<feature type="binding site" evidence="1">
    <location>
        <begin position="10"/>
        <end position="15"/>
    </location>
    <ligand>
        <name>ITP</name>
        <dbReference type="ChEBI" id="CHEBI:61402"/>
    </ligand>
</feature>
<feature type="binding site" evidence="1">
    <location>
        <position position="40"/>
    </location>
    <ligand>
        <name>Mg(2+)</name>
        <dbReference type="ChEBI" id="CHEBI:18420"/>
    </ligand>
</feature>
<feature type="binding site" evidence="1">
    <location>
        <position position="52"/>
    </location>
    <ligand>
        <name>ITP</name>
        <dbReference type="ChEBI" id="CHEBI:61402"/>
    </ligand>
</feature>
<feature type="binding site" evidence="1">
    <location>
        <begin position="68"/>
        <end position="69"/>
    </location>
    <ligand>
        <name>ITP</name>
        <dbReference type="ChEBI" id="CHEBI:61402"/>
    </ligand>
</feature>
<feature type="binding site" evidence="1">
    <location>
        <position position="85"/>
    </location>
    <ligand>
        <name>ITP</name>
        <dbReference type="ChEBI" id="CHEBI:61402"/>
    </ligand>
</feature>
<feature type="binding site" evidence="1">
    <location>
        <begin position="145"/>
        <end position="148"/>
    </location>
    <ligand>
        <name>ITP</name>
        <dbReference type="ChEBI" id="CHEBI:61402"/>
    </ligand>
</feature>
<feature type="binding site" evidence="1">
    <location>
        <position position="168"/>
    </location>
    <ligand>
        <name>ITP</name>
        <dbReference type="ChEBI" id="CHEBI:61402"/>
    </ligand>
</feature>
<feature type="binding site" evidence="1">
    <location>
        <begin position="173"/>
        <end position="174"/>
    </location>
    <ligand>
        <name>ITP</name>
        <dbReference type="ChEBI" id="CHEBI:61402"/>
    </ligand>
</feature>
<keyword id="KW-0963">Cytoplasm</keyword>
<keyword id="KW-0378">Hydrolase</keyword>
<keyword id="KW-0460">Magnesium</keyword>
<keyword id="KW-0464">Manganese</keyword>
<keyword id="KW-0479">Metal-binding</keyword>
<keyword id="KW-0546">Nucleotide metabolism</keyword>
<keyword id="KW-0547">Nucleotide-binding</keyword>
<keyword id="KW-1185">Reference proteome</keyword>
<comment type="function">
    <text evidence="1">Pyrophosphatase that hydrolyzes non-canonical purine nucleotides such as inosine triphosphate (ITP), deoxyinosine triphosphate (dITP) or xanthosine 5'-triphosphate (XTP) to their respective monophosphate derivatives. The enzyme does not distinguish between the deoxy- and ribose forms. Probably excludes non-canonical purines from RNA and DNA precursor pools, thus preventing their incorporation into RNA and DNA and avoiding chromosomal lesions.</text>
</comment>
<comment type="catalytic activity">
    <reaction evidence="1">
        <text>ITP + H2O = IMP + diphosphate + H(+)</text>
        <dbReference type="Rhea" id="RHEA:29399"/>
        <dbReference type="ChEBI" id="CHEBI:15377"/>
        <dbReference type="ChEBI" id="CHEBI:15378"/>
        <dbReference type="ChEBI" id="CHEBI:33019"/>
        <dbReference type="ChEBI" id="CHEBI:58053"/>
        <dbReference type="ChEBI" id="CHEBI:61402"/>
        <dbReference type="EC" id="3.6.1.66"/>
    </reaction>
    <physiologicalReaction direction="left-to-right" evidence="1">
        <dbReference type="Rhea" id="RHEA:29400"/>
    </physiologicalReaction>
</comment>
<comment type="catalytic activity">
    <reaction evidence="1">
        <text>dITP + H2O = dIMP + diphosphate + H(+)</text>
        <dbReference type="Rhea" id="RHEA:28342"/>
        <dbReference type="ChEBI" id="CHEBI:15377"/>
        <dbReference type="ChEBI" id="CHEBI:15378"/>
        <dbReference type="ChEBI" id="CHEBI:33019"/>
        <dbReference type="ChEBI" id="CHEBI:61194"/>
        <dbReference type="ChEBI" id="CHEBI:61382"/>
        <dbReference type="EC" id="3.6.1.66"/>
    </reaction>
    <physiologicalReaction direction="left-to-right" evidence="1">
        <dbReference type="Rhea" id="RHEA:28343"/>
    </physiologicalReaction>
</comment>
<comment type="catalytic activity">
    <reaction evidence="1">
        <text>XTP + H2O = XMP + diphosphate + H(+)</text>
        <dbReference type="Rhea" id="RHEA:28610"/>
        <dbReference type="ChEBI" id="CHEBI:15377"/>
        <dbReference type="ChEBI" id="CHEBI:15378"/>
        <dbReference type="ChEBI" id="CHEBI:33019"/>
        <dbReference type="ChEBI" id="CHEBI:57464"/>
        <dbReference type="ChEBI" id="CHEBI:61314"/>
        <dbReference type="EC" id="3.6.1.66"/>
    </reaction>
    <physiologicalReaction direction="left-to-right" evidence="1">
        <dbReference type="Rhea" id="RHEA:28611"/>
    </physiologicalReaction>
</comment>
<comment type="cofactor">
    <cofactor evidence="1">
        <name>Mg(2+)</name>
        <dbReference type="ChEBI" id="CHEBI:18420"/>
    </cofactor>
    <cofactor evidence="1">
        <name>Mn(2+)</name>
        <dbReference type="ChEBI" id="CHEBI:29035"/>
    </cofactor>
    <text evidence="1">Binds 1 divalent metal cation per subunit; can use either Mg(2+) or Mn(2+).</text>
</comment>
<comment type="subunit">
    <text evidence="1">Homodimer.</text>
</comment>
<comment type="subcellular location">
    <subcellularLocation>
        <location evidence="1">Cytoplasm</location>
    </subcellularLocation>
</comment>
<comment type="similarity">
    <text evidence="1">Belongs to the HAM1 NTPase family.</text>
</comment>
<evidence type="ECO:0000255" key="1">
    <source>
        <dbReference type="HAMAP-Rule" id="MF_03148"/>
    </source>
</evidence>
<accession>A7RWC9</accession>
<gene>
    <name type="ORF">v1g163483</name>
</gene>
<reference key="1">
    <citation type="journal article" date="2007" name="Science">
        <title>Sea anemone genome reveals ancestral eumetazoan gene repertoire and genomic organization.</title>
        <authorList>
            <person name="Putnam N.H."/>
            <person name="Srivastava M."/>
            <person name="Hellsten U."/>
            <person name="Dirks B."/>
            <person name="Chapman J."/>
            <person name="Salamov A."/>
            <person name="Terry A."/>
            <person name="Shapiro H."/>
            <person name="Lindquist E."/>
            <person name="Kapitonov V.V."/>
            <person name="Jurka J."/>
            <person name="Genikhovich G."/>
            <person name="Grigoriev I.V."/>
            <person name="Lucas S.M."/>
            <person name="Steele R.E."/>
            <person name="Finnerty J.R."/>
            <person name="Technau U."/>
            <person name="Martindale M.Q."/>
            <person name="Rokhsar D.S."/>
        </authorList>
    </citation>
    <scope>NUCLEOTIDE SEQUENCE [LARGE SCALE GENOMIC DNA]</scope>
    <source>
        <strain>CH2 X CH6</strain>
    </source>
</reference>
<sequence length="203" mass="22689">MSRKSLVFVTGNQNKLKEVVAILGDAFPWKVESKDIDLPEFQGEPDEISEEKCKIAAIKIAGPVIVEDTCLCFNAFGGLPGPYIKWFLKKLGPEGLHRMLTGWEDKTAYALCTFAYSSGKPDDPVLLFRGKTMGQIVEPRGPRNFGWDPCFQPDGFHQTYAEMASEVKNGISHRGKALQALKDHFLSLSEPDIKKAKCDEHER</sequence>
<name>ITPA_NEMVE</name>
<organism>
    <name type="scientific">Nematostella vectensis</name>
    <name type="common">Starlet sea anemone</name>
    <dbReference type="NCBI Taxonomy" id="45351"/>
    <lineage>
        <taxon>Eukaryota</taxon>
        <taxon>Metazoa</taxon>
        <taxon>Cnidaria</taxon>
        <taxon>Anthozoa</taxon>
        <taxon>Hexacorallia</taxon>
        <taxon>Actiniaria</taxon>
        <taxon>Edwardsiidae</taxon>
        <taxon>Nematostella</taxon>
    </lineage>
</organism>
<proteinExistence type="inferred from homology"/>
<dbReference type="EC" id="3.6.1.66" evidence="1"/>
<dbReference type="EMBL" id="DS469546">
    <property type="protein sequence ID" value="EDO44293.1"/>
    <property type="molecule type" value="Genomic_DNA"/>
</dbReference>
<dbReference type="RefSeq" id="XP_001636356.1">
    <property type="nucleotide sequence ID" value="XM_001636306.1"/>
</dbReference>
<dbReference type="SMR" id="A7RWC9"/>
<dbReference type="FunCoup" id="A7RWC9">
    <property type="interactions" value="603"/>
</dbReference>
<dbReference type="STRING" id="45351.A7RWC9"/>
<dbReference type="EnsemblMetazoa" id="EDO44293">
    <property type="protein sequence ID" value="EDO44293"/>
    <property type="gene ID" value="NEMVEDRAFT_v1g163483"/>
</dbReference>
<dbReference type="KEGG" id="nve:5516220"/>
<dbReference type="eggNOG" id="KOG3222">
    <property type="taxonomic scope" value="Eukaryota"/>
</dbReference>
<dbReference type="HOGENOM" id="CLU_082080_1_1_1"/>
<dbReference type="InParanoid" id="A7RWC9"/>
<dbReference type="OMA" id="YDPIFQP"/>
<dbReference type="OrthoDB" id="6288734at2759"/>
<dbReference type="PhylomeDB" id="A7RWC9"/>
<dbReference type="Proteomes" id="UP000001593">
    <property type="component" value="Unassembled WGS sequence"/>
</dbReference>
<dbReference type="GO" id="GO:0005737">
    <property type="term" value="C:cytoplasm"/>
    <property type="evidence" value="ECO:0000318"/>
    <property type="project" value="GO_Central"/>
</dbReference>
<dbReference type="GO" id="GO:0035870">
    <property type="term" value="F:dITP diphosphatase activity"/>
    <property type="evidence" value="ECO:0007669"/>
    <property type="project" value="RHEA"/>
</dbReference>
<dbReference type="GO" id="GO:0036220">
    <property type="term" value="F:ITP diphosphatase activity"/>
    <property type="evidence" value="ECO:0007669"/>
    <property type="project" value="RHEA"/>
</dbReference>
<dbReference type="GO" id="GO:0046872">
    <property type="term" value="F:metal ion binding"/>
    <property type="evidence" value="ECO:0007669"/>
    <property type="project" value="UniProtKB-KW"/>
</dbReference>
<dbReference type="GO" id="GO:0047429">
    <property type="term" value="F:nucleoside triphosphate diphosphatase activity"/>
    <property type="evidence" value="ECO:0000318"/>
    <property type="project" value="GO_Central"/>
</dbReference>
<dbReference type="GO" id="GO:0000166">
    <property type="term" value="F:nucleotide binding"/>
    <property type="evidence" value="ECO:0007669"/>
    <property type="project" value="UniProtKB-KW"/>
</dbReference>
<dbReference type="GO" id="GO:0036222">
    <property type="term" value="F:XTP diphosphatase activity"/>
    <property type="evidence" value="ECO:0007669"/>
    <property type="project" value="RHEA"/>
</dbReference>
<dbReference type="GO" id="GO:0009204">
    <property type="term" value="P:deoxyribonucleoside triphosphate catabolic process"/>
    <property type="evidence" value="ECO:0007669"/>
    <property type="project" value="UniProtKB-UniRule"/>
</dbReference>
<dbReference type="GO" id="GO:0009143">
    <property type="term" value="P:nucleoside triphosphate catabolic process"/>
    <property type="evidence" value="ECO:0000318"/>
    <property type="project" value="GO_Central"/>
</dbReference>
<dbReference type="GO" id="GO:0009117">
    <property type="term" value="P:nucleotide metabolic process"/>
    <property type="evidence" value="ECO:0007669"/>
    <property type="project" value="UniProtKB-KW"/>
</dbReference>
<dbReference type="CDD" id="cd00515">
    <property type="entry name" value="HAM1"/>
    <property type="match status" value="1"/>
</dbReference>
<dbReference type="FunFam" id="3.90.950.10:FF:000003">
    <property type="entry name" value="Inosine triphosphate pyrophosphatase"/>
    <property type="match status" value="1"/>
</dbReference>
<dbReference type="Gene3D" id="3.90.950.10">
    <property type="match status" value="1"/>
</dbReference>
<dbReference type="HAMAP" id="MF_03148">
    <property type="entry name" value="HAM1_NTPase"/>
    <property type="match status" value="1"/>
</dbReference>
<dbReference type="InterPro" id="IPR027502">
    <property type="entry name" value="ITPase"/>
</dbReference>
<dbReference type="InterPro" id="IPR029001">
    <property type="entry name" value="ITPase-like_fam"/>
</dbReference>
<dbReference type="InterPro" id="IPR002637">
    <property type="entry name" value="RdgB/HAM1"/>
</dbReference>
<dbReference type="NCBIfam" id="TIGR00042">
    <property type="entry name" value="RdgB/HAM1 family non-canonical purine NTP pyrophosphatase"/>
    <property type="match status" value="1"/>
</dbReference>
<dbReference type="PANTHER" id="PTHR11067:SF9">
    <property type="entry name" value="INOSINE TRIPHOSPHATE PYROPHOSPHATASE"/>
    <property type="match status" value="1"/>
</dbReference>
<dbReference type="PANTHER" id="PTHR11067">
    <property type="entry name" value="INOSINE TRIPHOSPHATE PYROPHOSPHATASE/HAM1 PROTEIN"/>
    <property type="match status" value="1"/>
</dbReference>
<dbReference type="Pfam" id="PF01725">
    <property type="entry name" value="Ham1p_like"/>
    <property type="match status" value="1"/>
</dbReference>
<dbReference type="SUPFAM" id="SSF52972">
    <property type="entry name" value="ITPase-like"/>
    <property type="match status" value="1"/>
</dbReference>